<comment type="function">
    <text evidence="2">Probable lipid transfer protein.</text>
</comment>
<comment type="subcellular location">
    <molecule>Isoform 2</molecule>
    <subcellularLocation>
        <location evidence="9">Secreted</location>
    </subcellularLocation>
</comment>
<comment type="subcellular location">
    <molecule>Isoform 1</molecule>
    <subcellularLocation>
        <location evidence="3">Cell membrane</location>
        <topology evidence="3">Lipid-anchor</topology>
        <topology evidence="3">GPI-anchor</topology>
    </subcellularLocation>
</comment>
<comment type="alternative products">
    <event type="alternative splicing"/>
    <isoform>
        <id>Q9FY78-1</id>
        <name>1</name>
        <sequence type="displayed"/>
    </isoform>
    <isoform>
        <id>Q9FY78-2</id>
        <name>2</name>
        <sequence type="described" ref="VSP_060824 VSP_060825"/>
    </isoform>
</comment>
<comment type="tissue specificity">
    <text evidence="5 6">Confined to the ovaries of the inflorescence.</text>
</comment>
<comment type="miscellaneous">
    <molecule>Isoform 2</molecule>
    <text evidence="9">Has no GPI-anchor.</text>
</comment>
<comment type="similarity">
    <text evidence="9">Belongs to the plant LTP family.</text>
</comment>
<evidence type="ECO:0000250" key="1">
    <source>
        <dbReference type="UniProtKB" id="A0A0B4JDK1"/>
    </source>
</evidence>
<evidence type="ECO:0000250" key="2">
    <source>
        <dbReference type="UniProtKB" id="Q9C7F7"/>
    </source>
</evidence>
<evidence type="ECO:0000255" key="3"/>
<evidence type="ECO:0000255" key="4">
    <source>
        <dbReference type="PROSITE-ProRule" id="PRU00498"/>
    </source>
</evidence>
<evidence type="ECO:0000269" key="5">
    <source>
    </source>
</evidence>
<evidence type="ECO:0000269" key="6">
    <source>
    </source>
</evidence>
<evidence type="ECO:0000303" key="7">
    <source>
    </source>
</evidence>
<evidence type="ECO:0000303" key="8">
    <source>
    </source>
</evidence>
<evidence type="ECO:0000305" key="9"/>
<evidence type="ECO:0000312" key="10">
    <source>
        <dbReference type="Araport" id="AT5G09370"/>
    </source>
</evidence>
<evidence type="ECO:0000312" key="11">
    <source>
        <dbReference type="EMBL" id="BAE73260.1"/>
    </source>
</evidence>
<evidence type="ECO:0000312" key="12">
    <source>
        <dbReference type="EMBL" id="CAC05463.1"/>
    </source>
</evidence>
<keyword id="KW-0025">Alternative splicing</keyword>
<keyword id="KW-1003">Cell membrane</keyword>
<keyword id="KW-1015">Disulfide bond</keyword>
<keyword id="KW-0325">Glycoprotein</keyword>
<keyword id="KW-0336">GPI-anchor</keyword>
<keyword id="KW-0449">Lipoprotein</keyword>
<keyword id="KW-0472">Membrane</keyword>
<keyword id="KW-1185">Reference proteome</keyword>
<keyword id="KW-0964">Secreted</keyword>
<keyword id="KW-0732">Signal</keyword>
<reference key="1">
    <citation type="journal article" date="2011" name="Plant Cell Physiol.">
        <title>Expression and genome-wide analysis of the xylogen-type gene family.</title>
        <authorList>
            <person name="Kobayashi Y."/>
            <person name="Motose H."/>
            <person name="Iwamoto K."/>
            <person name="Fukuda H."/>
        </authorList>
    </citation>
    <scope>NUCLEOTIDE SEQUENCE [MRNA] (ISOFORM 1)</scope>
    <scope>TISSUE SPECIFICITY</scope>
    <scope>GENE FAMILY</scope>
    <scope>NOMENCLATURE</scope>
    <source>
        <strain>cv. Columbia</strain>
    </source>
</reference>
<reference key="2">
    <citation type="journal article" date="2000" name="Nature">
        <title>Sequence and analysis of chromosome 5 of the plant Arabidopsis thaliana.</title>
        <authorList>
            <person name="Tabata S."/>
            <person name="Kaneko T."/>
            <person name="Nakamura Y."/>
            <person name="Kotani H."/>
            <person name="Kato T."/>
            <person name="Asamizu E."/>
            <person name="Miyajima N."/>
            <person name="Sasamoto S."/>
            <person name="Kimura T."/>
            <person name="Hosouchi T."/>
            <person name="Kawashima K."/>
            <person name="Kohara M."/>
            <person name="Matsumoto M."/>
            <person name="Matsuno A."/>
            <person name="Muraki A."/>
            <person name="Nakayama S."/>
            <person name="Nakazaki N."/>
            <person name="Naruo K."/>
            <person name="Okumura S."/>
            <person name="Shinpo S."/>
            <person name="Takeuchi C."/>
            <person name="Wada T."/>
            <person name="Watanabe A."/>
            <person name="Yamada M."/>
            <person name="Yasuda M."/>
            <person name="Sato S."/>
            <person name="de la Bastide M."/>
            <person name="Huang E."/>
            <person name="Spiegel L."/>
            <person name="Gnoj L."/>
            <person name="O'Shaughnessy A."/>
            <person name="Preston R."/>
            <person name="Habermann K."/>
            <person name="Murray J."/>
            <person name="Johnson D."/>
            <person name="Rohlfing T."/>
            <person name="Nelson J."/>
            <person name="Stoneking T."/>
            <person name="Pepin K."/>
            <person name="Spieth J."/>
            <person name="Sekhon M."/>
            <person name="Armstrong J."/>
            <person name="Becker M."/>
            <person name="Belter E."/>
            <person name="Cordum H."/>
            <person name="Cordes M."/>
            <person name="Courtney L."/>
            <person name="Courtney W."/>
            <person name="Dante M."/>
            <person name="Du H."/>
            <person name="Edwards J."/>
            <person name="Fryman J."/>
            <person name="Haakensen B."/>
            <person name="Lamar E."/>
            <person name="Latreille P."/>
            <person name="Leonard S."/>
            <person name="Meyer R."/>
            <person name="Mulvaney E."/>
            <person name="Ozersky P."/>
            <person name="Riley A."/>
            <person name="Strowmatt C."/>
            <person name="Wagner-McPherson C."/>
            <person name="Wollam A."/>
            <person name="Yoakum M."/>
            <person name="Bell M."/>
            <person name="Dedhia N."/>
            <person name="Parnell L."/>
            <person name="Shah R."/>
            <person name="Rodriguez M."/>
            <person name="Hoon See L."/>
            <person name="Vil D."/>
            <person name="Baker J."/>
            <person name="Kirchoff K."/>
            <person name="Toth K."/>
            <person name="King L."/>
            <person name="Bahret A."/>
            <person name="Miller B."/>
            <person name="Marra M.A."/>
            <person name="Martienssen R."/>
            <person name="McCombie W.R."/>
            <person name="Wilson R.K."/>
            <person name="Murphy G."/>
            <person name="Bancroft I."/>
            <person name="Volckaert G."/>
            <person name="Wambutt R."/>
            <person name="Duesterhoeft A."/>
            <person name="Stiekema W."/>
            <person name="Pohl T."/>
            <person name="Entian K.-D."/>
            <person name="Terryn N."/>
            <person name="Hartley N."/>
            <person name="Bent E."/>
            <person name="Johnson S."/>
            <person name="Langham S.-A."/>
            <person name="McCullagh B."/>
            <person name="Robben J."/>
            <person name="Grymonprez B."/>
            <person name="Zimmermann W."/>
            <person name="Ramsperger U."/>
            <person name="Wedler H."/>
            <person name="Balke K."/>
            <person name="Wedler E."/>
            <person name="Peters S."/>
            <person name="van Staveren M."/>
            <person name="Dirkse W."/>
            <person name="Mooijman P."/>
            <person name="Klein Lankhorst R."/>
            <person name="Weitzenegger T."/>
            <person name="Bothe G."/>
            <person name="Rose M."/>
            <person name="Hauf J."/>
            <person name="Berneiser S."/>
            <person name="Hempel S."/>
            <person name="Feldpausch M."/>
            <person name="Lamberth S."/>
            <person name="Villarroel R."/>
            <person name="Gielen J."/>
            <person name="Ardiles W."/>
            <person name="Bents O."/>
            <person name="Lemcke K."/>
            <person name="Kolesov G."/>
            <person name="Mayer K.F.X."/>
            <person name="Rudd S."/>
            <person name="Schoof H."/>
            <person name="Schueller C."/>
            <person name="Zaccaria P."/>
            <person name="Mewes H.-W."/>
            <person name="Bevan M."/>
            <person name="Fransz P.F."/>
        </authorList>
    </citation>
    <scope>NUCLEOTIDE SEQUENCE [LARGE SCALE GENOMIC DNA]</scope>
    <source>
        <strain>cv. Columbia</strain>
    </source>
</reference>
<reference key="3">
    <citation type="journal article" date="2017" name="Plant J.">
        <title>Araport11: a complete reannotation of the Arabidopsis thaliana reference genome.</title>
        <authorList>
            <person name="Cheng C.Y."/>
            <person name="Krishnakumar V."/>
            <person name="Chan A.P."/>
            <person name="Thibaud-Nissen F."/>
            <person name="Schobel S."/>
            <person name="Town C.D."/>
        </authorList>
    </citation>
    <scope>GENOME REANNOTATION</scope>
    <source>
        <strain>cv. Columbia</strain>
    </source>
</reference>
<reference key="4">
    <citation type="journal article" date="2002" name="Science">
        <title>Functional annotation of a full-length Arabidopsis cDNA collection.</title>
        <authorList>
            <person name="Seki M."/>
            <person name="Narusaka M."/>
            <person name="Kamiya A."/>
            <person name="Ishida J."/>
            <person name="Satou M."/>
            <person name="Sakurai T."/>
            <person name="Nakajima M."/>
            <person name="Enju A."/>
            <person name="Akiyama K."/>
            <person name="Oono Y."/>
            <person name="Muramatsu M."/>
            <person name="Hayashizaki Y."/>
            <person name="Kawai J."/>
            <person name="Carninci P."/>
            <person name="Itoh M."/>
            <person name="Ishii Y."/>
            <person name="Arakawa T."/>
            <person name="Shibata K."/>
            <person name="Shinagawa A."/>
            <person name="Shinozaki K."/>
        </authorList>
    </citation>
    <scope>NUCLEOTIDE SEQUENCE [LARGE SCALE MRNA] (ISOFORM 1)</scope>
    <source>
        <strain>cv. Columbia</strain>
    </source>
</reference>
<reference key="5">
    <citation type="submission" date="2002-03" db="EMBL/GenBank/DDBJ databases">
        <title>Full-length cDNA from Arabidopsis thaliana.</title>
        <authorList>
            <person name="Brover V.V."/>
            <person name="Troukhan M.E."/>
            <person name="Alexandrov N.A."/>
            <person name="Lu Y.-P."/>
            <person name="Flavell R.B."/>
            <person name="Feldmann K.A."/>
        </authorList>
    </citation>
    <scope>NUCLEOTIDE SEQUENCE [LARGE SCALE MRNA] (ISOFORM 2)</scope>
</reference>
<reference key="6">
    <citation type="journal article" date="2005" name="Plant Physiol.">
        <title>Analysis of the female gametophyte transcriptome of Arabidopsis by comparative expression profiling.</title>
        <authorList>
            <person name="Yu H.-J."/>
            <person name="Hogan P."/>
            <person name="Sundaresan V."/>
        </authorList>
    </citation>
    <scope>TISSUE SPECIFICITY</scope>
</reference>
<reference key="7">
    <citation type="journal article" date="2013" name="Plant Mol. Biol.">
        <title>Coexpression patterns indicate that GPI-anchored non-specific lipid transfer proteins are involved in accumulation of cuticular wax, suberin and sporopollenin.</title>
        <authorList>
            <person name="Edstam M.M."/>
            <person name="Blomqvist K."/>
            <person name="Ekloef A."/>
            <person name="Wennergren U."/>
            <person name="Edqvist J."/>
        </authorList>
    </citation>
    <scope>GENE FAMILY</scope>
    <scope>NOMENCLATURE</scope>
    <source>
        <strain>cv. Columbia</strain>
    </source>
</reference>
<feature type="signal peptide" evidence="3">
    <location>
        <begin position="1"/>
        <end position="24"/>
    </location>
</feature>
<feature type="chain" id="PRO_5014312872" description="Non-specific lipid transfer protein GPI-anchored 29">
    <location>
        <begin position="25"/>
        <end position="134"/>
    </location>
</feature>
<feature type="propeptide" id="PRO_0000451661" description="Removed in mature form" evidence="3">
    <location>
        <begin position="135"/>
        <end position="158"/>
    </location>
</feature>
<feature type="lipid moiety-binding region" description="GPI-anchor amidated serine" evidence="3">
    <location>
        <position position="134"/>
    </location>
</feature>
<feature type="glycosylation site" description="N-linked (GlcNAc...) asparagine" evidence="4">
    <location>
        <position position="84"/>
    </location>
</feature>
<feature type="disulfide bond" evidence="1">
    <location>
        <begin position="28"/>
        <end position="71"/>
    </location>
</feature>
<feature type="disulfide bond" evidence="1">
    <location>
        <begin position="38"/>
        <end position="55"/>
    </location>
</feature>
<feature type="disulfide bond" evidence="1">
    <location>
        <begin position="56"/>
        <end position="95"/>
    </location>
</feature>
<feature type="disulfide bond" evidence="1">
    <location>
        <begin position="69"/>
        <end position="105"/>
    </location>
</feature>
<feature type="splice variant" id="VSP_060824" description="In isoform 2.">
    <original>APVWGSGWAP</original>
    <variation>GKWNLFGLFA</variation>
    <location>
        <begin position="120"/>
        <end position="129"/>
    </location>
</feature>
<feature type="splice variant" id="VSP_060825" description="In isoform 2.">
    <location>
        <begin position="130"/>
        <end position="158"/>
    </location>
</feature>
<sequence length="158" mass="16164">MAYFSTATSLLLLVLSVSSPYVHGASDCDTLVITLFPCLPFISIGGTADTPTASCCSSLKNILDTKPICLCEGLKKAPLGIKLNVTKSATLPVACKLNAPPVSACDSLPPASPPTANGQAPVWGSGWAPAPSPSKGNSLIPISGFSFVIVTALAMFRI</sequence>
<accession>Q9FY78</accession>
<accession>Q8LD67</accession>
<gene>
    <name evidence="8" type="primary">LTPG29</name>
    <name evidence="7" type="synonym">XYLP4</name>
    <name evidence="7" type="synonym">XYP4</name>
    <name evidence="10" type="ordered locus">At5g09370</name>
    <name evidence="12" type="ORF">T5E8.170</name>
</gene>
<proteinExistence type="evidence at transcript level"/>
<name>LTG29_ARATH</name>
<protein>
    <recommendedName>
        <fullName evidence="8">Non-specific lipid transfer protein GPI-anchored 29</fullName>
        <shortName evidence="8">AtLTPG-29</shortName>
        <shortName evidence="8">Protein LTP-GPI-ANCHORED 29</shortName>
    </recommendedName>
    <alternativeName>
        <fullName evidence="11">Xylogen like protein 4</fullName>
        <shortName evidence="7">AtXYLP4</shortName>
        <shortName evidence="7">AtXYP4</shortName>
    </alternativeName>
</protein>
<organism>
    <name type="scientific">Arabidopsis thaliana</name>
    <name type="common">Mouse-ear cress</name>
    <dbReference type="NCBI Taxonomy" id="3702"/>
    <lineage>
        <taxon>Eukaryota</taxon>
        <taxon>Viridiplantae</taxon>
        <taxon>Streptophyta</taxon>
        <taxon>Embryophyta</taxon>
        <taxon>Tracheophyta</taxon>
        <taxon>Spermatophyta</taxon>
        <taxon>Magnoliopsida</taxon>
        <taxon>eudicotyledons</taxon>
        <taxon>Gunneridae</taxon>
        <taxon>Pentapetalae</taxon>
        <taxon>rosids</taxon>
        <taxon>malvids</taxon>
        <taxon>Brassicales</taxon>
        <taxon>Brassicaceae</taxon>
        <taxon>Camelineae</taxon>
        <taxon>Arabidopsis</taxon>
    </lineage>
</organism>
<dbReference type="EMBL" id="AB246323">
    <property type="protein sequence ID" value="BAE73260.1"/>
    <property type="molecule type" value="mRNA"/>
</dbReference>
<dbReference type="EMBL" id="AL391712">
    <property type="protein sequence ID" value="CAC05463.1"/>
    <property type="molecule type" value="Genomic_DNA"/>
</dbReference>
<dbReference type="EMBL" id="CP002688">
    <property type="protein sequence ID" value="AED91382.1"/>
    <property type="molecule type" value="Genomic_DNA"/>
</dbReference>
<dbReference type="EMBL" id="CP002688">
    <property type="protein sequence ID" value="AED91383.1"/>
    <property type="molecule type" value="Genomic_DNA"/>
</dbReference>
<dbReference type="EMBL" id="AK118479">
    <property type="protein sequence ID" value="BAC43083.1"/>
    <property type="molecule type" value="mRNA"/>
</dbReference>
<dbReference type="EMBL" id="AY086176">
    <property type="protein sequence ID" value="AAM63379.1"/>
    <property type="molecule type" value="mRNA"/>
</dbReference>
<dbReference type="RefSeq" id="NP_568210.1">
    <molecule id="Q9FY78-2"/>
    <property type="nucleotide sequence ID" value="NM_120973.5"/>
</dbReference>
<dbReference type="RefSeq" id="NP_850800.1">
    <molecule id="Q9FY78-1"/>
    <property type="nucleotide sequence ID" value="NM_180469.4"/>
</dbReference>
<dbReference type="SMR" id="Q9FY78"/>
<dbReference type="FunCoup" id="Q9FY78">
    <property type="interactions" value="2"/>
</dbReference>
<dbReference type="STRING" id="3702.Q9FY78"/>
<dbReference type="GlyCosmos" id="Q9FY78">
    <property type="glycosylation" value="1 site, No reported glycans"/>
</dbReference>
<dbReference type="GlyGen" id="Q9FY78">
    <property type="glycosylation" value="1 site"/>
</dbReference>
<dbReference type="PaxDb" id="3702-AT5G09370.1"/>
<dbReference type="EnsemblPlants" id="AT5G09370.1">
    <molecule id="Q9FY78-1"/>
    <property type="protein sequence ID" value="AT5G09370.1"/>
    <property type="gene ID" value="AT5G09370"/>
</dbReference>
<dbReference type="EnsemblPlants" id="AT5G09370.2">
    <molecule id="Q9FY78-2"/>
    <property type="protein sequence ID" value="AT5G09370.2"/>
    <property type="gene ID" value="AT5G09370"/>
</dbReference>
<dbReference type="GeneID" id="830796"/>
<dbReference type="Gramene" id="AT5G09370.1">
    <molecule id="Q9FY78-1"/>
    <property type="protein sequence ID" value="AT5G09370.1"/>
    <property type="gene ID" value="AT5G09370"/>
</dbReference>
<dbReference type="Gramene" id="AT5G09370.2">
    <molecule id="Q9FY78-2"/>
    <property type="protein sequence ID" value="AT5G09370.2"/>
    <property type="gene ID" value="AT5G09370"/>
</dbReference>
<dbReference type="KEGG" id="ath:AT5G09370"/>
<dbReference type="Araport" id="AT5G09370"/>
<dbReference type="TAIR" id="AT5G09370">
    <property type="gene designation" value="LTPG29"/>
</dbReference>
<dbReference type="HOGENOM" id="CLU_089796_5_2_1"/>
<dbReference type="InParanoid" id="Q9FY78"/>
<dbReference type="OMA" id="ECSAMIM"/>
<dbReference type="OrthoDB" id="659547at2759"/>
<dbReference type="PhylomeDB" id="Q9FY78"/>
<dbReference type="PRO" id="PR:Q9FY78"/>
<dbReference type="Proteomes" id="UP000006548">
    <property type="component" value="Chromosome 5"/>
</dbReference>
<dbReference type="ExpressionAtlas" id="Q9FY78">
    <property type="expression patterns" value="baseline and differential"/>
</dbReference>
<dbReference type="GO" id="GO:0005576">
    <property type="term" value="C:extracellular region"/>
    <property type="evidence" value="ECO:0007669"/>
    <property type="project" value="UniProtKB-SubCell"/>
</dbReference>
<dbReference type="GO" id="GO:0005886">
    <property type="term" value="C:plasma membrane"/>
    <property type="evidence" value="ECO:0007669"/>
    <property type="project" value="UniProtKB-SubCell"/>
</dbReference>
<dbReference type="GO" id="GO:0098552">
    <property type="term" value="C:side of membrane"/>
    <property type="evidence" value="ECO:0007669"/>
    <property type="project" value="UniProtKB-KW"/>
</dbReference>
<dbReference type="GO" id="GO:0008289">
    <property type="term" value="F:lipid binding"/>
    <property type="evidence" value="ECO:0007669"/>
    <property type="project" value="InterPro"/>
</dbReference>
<dbReference type="GO" id="GO:0006869">
    <property type="term" value="P:lipid transport"/>
    <property type="evidence" value="ECO:0007669"/>
    <property type="project" value="InterPro"/>
</dbReference>
<dbReference type="CDD" id="cd00010">
    <property type="entry name" value="AAI_LTSS"/>
    <property type="match status" value="1"/>
</dbReference>
<dbReference type="FunFam" id="1.10.110.10:FF:000001">
    <property type="entry name" value="Bifunctional inhibitor/lipid-transfer protein/seed storage 2S albumin superfamily protein"/>
    <property type="match status" value="1"/>
</dbReference>
<dbReference type="Gene3D" id="1.10.110.10">
    <property type="entry name" value="Plant lipid-transfer and hydrophobic proteins"/>
    <property type="match status" value="1"/>
</dbReference>
<dbReference type="InterPro" id="IPR036312">
    <property type="entry name" value="Bifun_inhib/LTP/seed_sf"/>
</dbReference>
<dbReference type="InterPro" id="IPR016140">
    <property type="entry name" value="Bifunc_inhib/LTP/seed_store"/>
</dbReference>
<dbReference type="InterPro" id="IPR043325">
    <property type="entry name" value="LTSS"/>
</dbReference>
<dbReference type="InterPro" id="IPR000528">
    <property type="entry name" value="Plant_nsLTP"/>
</dbReference>
<dbReference type="PANTHER" id="PTHR33044">
    <property type="entry name" value="BIFUNCTIONAL INHIBITOR/LIPID-TRANSFER PROTEIN/SEED STORAGE 2S ALBUMIN SUPERFAMILY PROTEIN-RELATED"/>
    <property type="match status" value="1"/>
</dbReference>
<dbReference type="Pfam" id="PF14368">
    <property type="entry name" value="LTP_2"/>
    <property type="match status" value="1"/>
</dbReference>
<dbReference type="PRINTS" id="PR00382">
    <property type="entry name" value="LIPIDTRNSFER"/>
</dbReference>
<dbReference type="SMART" id="SM00499">
    <property type="entry name" value="AAI"/>
    <property type="match status" value="1"/>
</dbReference>
<dbReference type="SUPFAM" id="SSF47699">
    <property type="entry name" value="Bifunctional inhibitor/lipid-transfer protein/seed storage 2S albumin"/>
    <property type="match status" value="1"/>
</dbReference>